<name>PFKA_SALAR</name>
<reference key="1">
    <citation type="submission" date="2007-11" db="EMBL/GenBank/DDBJ databases">
        <authorList>
            <consortium name="The Salmonella enterica serovar Arizonae Genome Sequencing Project"/>
            <person name="McClelland M."/>
            <person name="Sanderson E.K."/>
            <person name="Porwollik S."/>
            <person name="Spieth J."/>
            <person name="Clifton W.S."/>
            <person name="Fulton R."/>
            <person name="Chunyan W."/>
            <person name="Wollam A."/>
            <person name="Shah N."/>
            <person name="Pepin K."/>
            <person name="Bhonagiri V."/>
            <person name="Nash W."/>
            <person name="Johnson M."/>
            <person name="Thiruvilangam P."/>
            <person name="Wilson R."/>
        </authorList>
    </citation>
    <scope>NUCLEOTIDE SEQUENCE [LARGE SCALE GENOMIC DNA]</scope>
    <source>
        <strain>ATCC BAA-731 / CDC346-86 / RSK2980</strain>
    </source>
</reference>
<dbReference type="EC" id="2.7.1.11" evidence="1"/>
<dbReference type="EMBL" id="CP000880">
    <property type="protein sequence ID" value="ABX23396.1"/>
    <property type="molecule type" value="Genomic_DNA"/>
</dbReference>
<dbReference type="SMR" id="A9MI50"/>
<dbReference type="STRING" id="41514.SARI_03581"/>
<dbReference type="KEGG" id="ses:SARI_03581"/>
<dbReference type="HOGENOM" id="CLU_020655_0_1_6"/>
<dbReference type="UniPathway" id="UPA00109">
    <property type="reaction ID" value="UER00182"/>
</dbReference>
<dbReference type="Proteomes" id="UP000002084">
    <property type="component" value="Chromosome"/>
</dbReference>
<dbReference type="GO" id="GO:0005945">
    <property type="term" value="C:6-phosphofructokinase complex"/>
    <property type="evidence" value="ECO:0007669"/>
    <property type="project" value="TreeGrafter"/>
</dbReference>
<dbReference type="GO" id="GO:0003872">
    <property type="term" value="F:6-phosphofructokinase activity"/>
    <property type="evidence" value="ECO:0007669"/>
    <property type="project" value="UniProtKB-UniRule"/>
</dbReference>
<dbReference type="GO" id="GO:0016208">
    <property type="term" value="F:AMP binding"/>
    <property type="evidence" value="ECO:0007669"/>
    <property type="project" value="TreeGrafter"/>
</dbReference>
<dbReference type="GO" id="GO:0005524">
    <property type="term" value="F:ATP binding"/>
    <property type="evidence" value="ECO:0007669"/>
    <property type="project" value="UniProtKB-KW"/>
</dbReference>
<dbReference type="GO" id="GO:0070095">
    <property type="term" value="F:fructose-6-phosphate binding"/>
    <property type="evidence" value="ECO:0007669"/>
    <property type="project" value="TreeGrafter"/>
</dbReference>
<dbReference type="GO" id="GO:0042802">
    <property type="term" value="F:identical protein binding"/>
    <property type="evidence" value="ECO:0007669"/>
    <property type="project" value="TreeGrafter"/>
</dbReference>
<dbReference type="GO" id="GO:0046872">
    <property type="term" value="F:metal ion binding"/>
    <property type="evidence" value="ECO:0007669"/>
    <property type="project" value="UniProtKB-KW"/>
</dbReference>
<dbReference type="GO" id="GO:0048029">
    <property type="term" value="F:monosaccharide binding"/>
    <property type="evidence" value="ECO:0007669"/>
    <property type="project" value="TreeGrafter"/>
</dbReference>
<dbReference type="GO" id="GO:0061621">
    <property type="term" value="P:canonical glycolysis"/>
    <property type="evidence" value="ECO:0007669"/>
    <property type="project" value="TreeGrafter"/>
</dbReference>
<dbReference type="GO" id="GO:0030388">
    <property type="term" value="P:fructose 1,6-bisphosphate metabolic process"/>
    <property type="evidence" value="ECO:0007669"/>
    <property type="project" value="TreeGrafter"/>
</dbReference>
<dbReference type="GO" id="GO:0006002">
    <property type="term" value="P:fructose 6-phosphate metabolic process"/>
    <property type="evidence" value="ECO:0007669"/>
    <property type="project" value="InterPro"/>
</dbReference>
<dbReference type="CDD" id="cd00763">
    <property type="entry name" value="Bacterial_PFK"/>
    <property type="match status" value="1"/>
</dbReference>
<dbReference type="FunFam" id="3.40.50.450:FF:000001">
    <property type="entry name" value="ATP-dependent 6-phosphofructokinase"/>
    <property type="match status" value="1"/>
</dbReference>
<dbReference type="FunFam" id="3.40.50.460:FF:000002">
    <property type="entry name" value="ATP-dependent 6-phosphofructokinase"/>
    <property type="match status" value="1"/>
</dbReference>
<dbReference type="Gene3D" id="3.40.50.450">
    <property type="match status" value="1"/>
</dbReference>
<dbReference type="Gene3D" id="3.40.50.460">
    <property type="entry name" value="Phosphofructokinase domain"/>
    <property type="match status" value="1"/>
</dbReference>
<dbReference type="HAMAP" id="MF_00339">
    <property type="entry name" value="Phosphofructokinase_I_B1"/>
    <property type="match status" value="1"/>
</dbReference>
<dbReference type="InterPro" id="IPR022953">
    <property type="entry name" value="ATP_PFK"/>
</dbReference>
<dbReference type="InterPro" id="IPR012003">
    <property type="entry name" value="ATP_PFK_prok-type"/>
</dbReference>
<dbReference type="InterPro" id="IPR012828">
    <property type="entry name" value="PFKA_ATP_prok"/>
</dbReference>
<dbReference type="InterPro" id="IPR015912">
    <property type="entry name" value="Phosphofructokinase_CS"/>
</dbReference>
<dbReference type="InterPro" id="IPR000023">
    <property type="entry name" value="Phosphofructokinase_dom"/>
</dbReference>
<dbReference type="InterPro" id="IPR035966">
    <property type="entry name" value="PKF_sf"/>
</dbReference>
<dbReference type="NCBIfam" id="TIGR02482">
    <property type="entry name" value="PFKA_ATP"/>
    <property type="match status" value="1"/>
</dbReference>
<dbReference type="NCBIfam" id="NF002872">
    <property type="entry name" value="PRK03202.1"/>
    <property type="match status" value="1"/>
</dbReference>
<dbReference type="PANTHER" id="PTHR13697:SF4">
    <property type="entry name" value="ATP-DEPENDENT 6-PHOSPHOFRUCTOKINASE"/>
    <property type="match status" value="1"/>
</dbReference>
<dbReference type="PANTHER" id="PTHR13697">
    <property type="entry name" value="PHOSPHOFRUCTOKINASE"/>
    <property type="match status" value="1"/>
</dbReference>
<dbReference type="Pfam" id="PF00365">
    <property type="entry name" value="PFK"/>
    <property type="match status" value="1"/>
</dbReference>
<dbReference type="PIRSF" id="PIRSF000532">
    <property type="entry name" value="ATP_PFK_prok"/>
    <property type="match status" value="1"/>
</dbReference>
<dbReference type="PRINTS" id="PR00476">
    <property type="entry name" value="PHFRCTKINASE"/>
</dbReference>
<dbReference type="SUPFAM" id="SSF53784">
    <property type="entry name" value="Phosphofructokinase"/>
    <property type="match status" value="1"/>
</dbReference>
<dbReference type="PROSITE" id="PS00433">
    <property type="entry name" value="PHOSPHOFRUCTOKINASE"/>
    <property type="match status" value="1"/>
</dbReference>
<protein>
    <recommendedName>
        <fullName evidence="1">ATP-dependent 6-phosphofructokinase</fullName>
        <shortName evidence="1">ATP-PFK</shortName>
        <shortName evidence="1">Phosphofructokinase</shortName>
        <ecNumber evidence="1">2.7.1.11</ecNumber>
    </recommendedName>
    <alternativeName>
        <fullName evidence="1">Phosphohexokinase</fullName>
    </alternativeName>
</protein>
<evidence type="ECO:0000255" key="1">
    <source>
        <dbReference type="HAMAP-Rule" id="MF_00339"/>
    </source>
</evidence>
<accession>A9MI50</accession>
<organism>
    <name type="scientific">Salmonella arizonae (strain ATCC BAA-731 / CDC346-86 / RSK2980)</name>
    <dbReference type="NCBI Taxonomy" id="41514"/>
    <lineage>
        <taxon>Bacteria</taxon>
        <taxon>Pseudomonadati</taxon>
        <taxon>Pseudomonadota</taxon>
        <taxon>Gammaproteobacteria</taxon>
        <taxon>Enterobacterales</taxon>
        <taxon>Enterobacteriaceae</taxon>
        <taxon>Salmonella</taxon>
    </lineage>
</organism>
<keyword id="KW-0021">Allosteric enzyme</keyword>
<keyword id="KW-0067">ATP-binding</keyword>
<keyword id="KW-0963">Cytoplasm</keyword>
<keyword id="KW-0324">Glycolysis</keyword>
<keyword id="KW-0418">Kinase</keyword>
<keyword id="KW-0460">Magnesium</keyword>
<keyword id="KW-0479">Metal-binding</keyword>
<keyword id="KW-0547">Nucleotide-binding</keyword>
<keyword id="KW-1185">Reference proteome</keyword>
<keyword id="KW-0808">Transferase</keyword>
<sequence length="320" mass="34915">MIKKIGVLTSGGDAPGMNAAIRGVVRAALTEGLEVMGIYDGYLGLYEDRMVQLDRYSVSDMINRGGTFLGSARFPEFRDENIRAVAIENLKKRGIDALVVIGGDGSYMGAKRLTEMGFPCIGLPGTIDNDIKGTDYTIGYFTALGTVVEAIDRLRDTSSSHQRISIVEVMGRYCGDLTLAAAIAGGCEFIVVPEVEFNREDLVAEIKAGIAKGKKHAIVAITEHMCDVDELAHFIEKETGRETRATVLGHIQRGGSPVPYDRILASRMGAYAIDLLLEGHGGRCVGIQNEQLVHHDIIDAIENMKRPFKSDWMECAKKLY</sequence>
<proteinExistence type="inferred from homology"/>
<gene>
    <name evidence="1" type="primary">pfkA</name>
    <name type="ordered locus">SARI_03581</name>
</gene>
<comment type="function">
    <text evidence="1">Catalyzes the phosphorylation of D-fructose 6-phosphate to fructose 1,6-bisphosphate by ATP, the first committing step of glycolysis.</text>
</comment>
<comment type="catalytic activity">
    <reaction evidence="1">
        <text>beta-D-fructose 6-phosphate + ATP = beta-D-fructose 1,6-bisphosphate + ADP + H(+)</text>
        <dbReference type="Rhea" id="RHEA:16109"/>
        <dbReference type="ChEBI" id="CHEBI:15378"/>
        <dbReference type="ChEBI" id="CHEBI:30616"/>
        <dbReference type="ChEBI" id="CHEBI:32966"/>
        <dbReference type="ChEBI" id="CHEBI:57634"/>
        <dbReference type="ChEBI" id="CHEBI:456216"/>
        <dbReference type="EC" id="2.7.1.11"/>
    </reaction>
</comment>
<comment type="cofactor">
    <cofactor evidence="1">
        <name>Mg(2+)</name>
        <dbReference type="ChEBI" id="CHEBI:18420"/>
    </cofactor>
</comment>
<comment type="activity regulation">
    <text evidence="1">Allosterically activated by ADP and other diphosphonucleosides, and allosterically inhibited by phosphoenolpyruvate.</text>
</comment>
<comment type="pathway">
    <text evidence="1">Carbohydrate degradation; glycolysis; D-glyceraldehyde 3-phosphate and glycerone phosphate from D-glucose: step 3/4.</text>
</comment>
<comment type="subunit">
    <text evidence="1">Homotetramer.</text>
</comment>
<comment type="subcellular location">
    <subcellularLocation>
        <location evidence="1">Cytoplasm</location>
    </subcellularLocation>
</comment>
<comment type="similarity">
    <text evidence="1">Belongs to the phosphofructokinase type A (PFKA) family. ATP-dependent PFK group I subfamily. Prokaryotic clade 'B1' sub-subfamily.</text>
</comment>
<feature type="chain" id="PRO_1000079311" description="ATP-dependent 6-phosphofructokinase">
    <location>
        <begin position="1"/>
        <end position="320"/>
    </location>
</feature>
<feature type="active site" description="Proton acceptor" evidence="1">
    <location>
        <position position="128"/>
    </location>
</feature>
<feature type="binding site" evidence="1">
    <location>
        <position position="12"/>
    </location>
    <ligand>
        <name>ATP</name>
        <dbReference type="ChEBI" id="CHEBI:30616"/>
    </ligand>
</feature>
<feature type="binding site" evidence="1">
    <location>
        <begin position="22"/>
        <end position="26"/>
    </location>
    <ligand>
        <name>ADP</name>
        <dbReference type="ChEBI" id="CHEBI:456216"/>
        <note>allosteric activator; ligand shared between dimeric partners</note>
    </ligand>
</feature>
<feature type="binding site" evidence="1">
    <location>
        <begin position="55"/>
        <end position="60"/>
    </location>
    <ligand>
        <name>ADP</name>
        <dbReference type="ChEBI" id="CHEBI:456216"/>
        <note>allosteric activator; ligand shared between dimeric partners</note>
    </ligand>
</feature>
<feature type="binding site" evidence="1">
    <location>
        <begin position="73"/>
        <end position="74"/>
    </location>
    <ligand>
        <name>ATP</name>
        <dbReference type="ChEBI" id="CHEBI:30616"/>
    </ligand>
</feature>
<feature type="binding site" evidence="1">
    <location>
        <begin position="103"/>
        <end position="106"/>
    </location>
    <ligand>
        <name>ATP</name>
        <dbReference type="ChEBI" id="CHEBI:30616"/>
    </ligand>
</feature>
<feature type="binding site" evidence="1">
    <location>
        <position position="104"/>
    </location>
    <ligand>
        <name>Mg(2+)</name>
        <dbReference type="ChEBI" id="CHEBI:18420"/>
        <note>catalytic</note>
    </ligand>
</feature>
<feature type="binding site" description="in other chain" evidence="1">
    <location>
        <begin position="126"/>
        <end position="128"/>
    </location>
    <ligand>
        <name>substrate</name>
        <note>ligand shared between dimeric partners</note>
    </ligand>
</feature>
<feature type="binding site" description="in other chain" evidence="1">
    <location>
        <position position="155"/>
    </location>
    <ligand>
        <name>ADP</name>
        <dbReference type="ChEBI" id="CHEBI:456216"/>
        <note>allosteric activator; ligand shared between dimeric partners</note>
    </ligand>
</feature>
<feature type="binding site" evidence="1">
    <location>
        <position position="163"/>
    </location>
    <ligand>
        <name>substrate</name>
        <note>ligand shared between dimeric partners</note>
    </ligand>
</feature>
<feature type="binding site" description="in other chain" evidence="1">
    <location>
        <begin position="170"/>
        <end position="172"/>
    </location>
    <ligand>
        <name>substrate</name>
        <note>ligand shared between dimeric partners</note>
    </ligand>
</feature>
<feature type="binding site" description="in other chain" evidence="1">
    <location>
        <begin position="186"/>
        <end position="188"/>
    </location>
    <ligand>
        <name>ADP</name>
        <dbReference type="ChEBI" id="CHEBI:456216"/>
        <note>allosteric activator; ligand shared between dimeric partners</note>
    </ligand>
</feature>
<feature type="binding site" description="in other chain" evidence="1">
    <location>
        <position position="212"/>
    </location>
    <ligand>
        <name>ADP</name>
        <dbReference type="ChEBI" id="CHEBI:456216"/>
        <note>allosteric activator; ligand shared between dimeric partners</note>
    </ligand>
</feature>
<feature type="binding site" description="in other chain" evidence="1">
    <location>
        <begin position="214"/>
        <end position="216"/>
    </location>
    <ligand>
        <name>ADP</name>
        <dbReference type="ChEBI" id="CHEBI:456216"/>
        <note>allosteric activator; ligand shared between dimeric partners</note>
    </ligand>
</feature>
<feature type="binding site" description="in other chain" evidence="1">
    <location>
        <position position="223"/>
    </location>
    <ligand>
        <name>substrate</name>
        <note>ligand shared between dimeric partners</note>
    </ligand>
</feature>
<feature type="binding site" evidence="1">
    <location>
        <position position="244"/>
    </location>
    <ligand>
        <name>substrate</name>
        <note>ligand shared between dimeric partners</note>
    </ligand>
</feature>
<feature type="binding site" description="in other chain" evidence="1">
    <location>
        <begin position="250"/>
        <end position="253"/>
    </location>
    <ligand>
        <name>substrate</name>
        <note>ligand shared between dimeric partners</note>
    </ligand>
</feature>